<name>RLMKL_SHESW</name>
<organism>
    <name type="scientific">Shewanella sp. (strain W3-18-1)</name>
    <dbReference type="NCBI Taxonomy" id="351745"/>
    <lineage>
        <taxon>Bacteria</taxon>
        <taxon>Pseudomonadati</taxon>
        <taxon>Pseudomonadota</taxon>
        <taxon>Gammaproteobacteria</taxon>
        <taxon>Alteromonadales</taxon>
        <taxon>Shewanellaceae</taxon>
        <taxon>Shewanella</taxon>
    </lineage>
</organism>
<evidence type="ECO:0000255" key="1">
    <source>
        <dbReference type="HAMAP-Rule" id="MF_01858"/>
    </source>
</evidence>
<protein>
    <recommendedName>
        <fullName evidence="1">Ribosomal RNA large subunit methyltransferase K/L</fullName>
    </recommendedName>
    <domain>
        <recommendedName>
            <fullName evidence="1">23S rRNA m2G2445 methyltransferase</fullName>
            <ecNumber evidence="1">2.1.1.173</ecNumber>
        </recommendedName>
        <alternativeName>
            <fullName evidence="1">rRNA (guanine-N(2)-)-methyltransferase RlmL</fullName>
        </alternativeName>
    </domain>
    <domain>
        <recommendedName>
            <fullName evidence="1">23S rRNA m7G2069 methyltransferase</fullName>
            <ecNumber evidence="1">2.1.1.264</ecNumber>
        </recommendedName>
        <alternativeName>
            <fullName evidence="1">rRNA (guanine-N(7)-)-methyltransferase RlmK</fullName>
        </alternativeName>
    </domain>
</protein>
<gene>
    <name evidence="1" type="primary">rlmL</name>
    <name type="ordered locus">Sputw3181_2393</name>
</gene>
<dbReference type="EC" id="2.1.1.173" evidence="1"/>
<dbReference type="EC" id="2.1.1.264" evidence="1"/>
<dbReference type="EMBL" id="CP000503">
    <property type="protein sequence ID" value="ABM25217.1"/>
    <property type="molecule type" value="Genomic_DNA"/>
</dbReference>
<dbReference type="RefSeq" id="WP_011789681.1">
    <property type="nucleotide sequence ID" value="NC_008750.1"/>
</dbReference>
<dbReference type="SMR" id="A1RKM2"/>
<dbReference type="KEGG" id="shw:Sputw3181_2393"/>
<dbReference type="HOGENOM" id="CLU_014042_2_0_6"/>
<dbReference type="Proteomes" id="UP000002597">
    <property type="component" value="Chromosome"/>
</dbReference>
<dbReference type="GO" id="GO:0005737">
    <property type="term" value="C:cytoplasm"/>
    <property type="evidence" value="ECO:0007669"/>
    <property type="project" value="UniProtKB-SubCell"/>
</dbReference>
<dbReference type="GO" id="GO:0052915">
    <property type="term" value="F:23S rRNA (guanine(2445)-N(2))-methyltransferase activity"/>
    <property type="evidence" value="ECO:0007669"/>
    <property type="project" value="UniProtKB-UniRule"/>
</dbReference>
<dbReference type="GO" id="GO:0003723">
    <property type="term" value="F:RNA binding"/>
    <property type="evidence" value="ECO:0007669"/>
    <property type="project" value="UniProtKB-KW"/>
</dbReference>
<dbReference type="GO" id="GO:0070043">
    <property type="term" value="F:rRNA (guanine-N7-)-methyltransferase activity"/>
    <property type="evidence" value="ECO:0007669"/>
    <property type="project" value="UniProtKB-UniRule"/>
</dbReference>
<dbReference type="CDD" id="cd02440">
    <property type="entry name" value="AdoMet_MTases"/>
    <property type="match status" value="1"/>
</dbReference>
<dbReference type="CDD" id="cd11715">
    <property type="entry name" value="THUMP_AdoMetMT"/>
    <property type="match status" value="1"/>
</dbReference>
<dbReference type="FunFam" id="3.40.50.150:FF:000039">
    <property type="entry name" value="Ribosomal RNA large subunit methyltransferase K/L"/>
    <property type="match status" value="1"/>
</dbReference>
<dbReference type="Gene3D" id="3.30.2130.30">
    <property type="match status" value="1"/>
</dbReference>
<dbReference type="Gene3D" id="3.30.750.80">
    <property type="entry name" value="RNA methyltransferase domain (HRMD) like"/>
    <property type="match status" value="1"/>
</dbReference>
<dbReference type="Gene3D" id="3.40.50.150">
    <property type="entry name" value="Vaccinia Virus protein VP39"/>
    <property type="match status" value="2"/>
</dbReference>
<dbReference type="HAMAP" id="MF_01858">
    <property type="entry name" value="23SrRNA_methyltr_KL"/>
    <property type="match status" value="1"/>
</dbReference>
<dbReference type="InterPro" id="IPR017244">
    <property type="entry name" value="23SrRNA_methyltr_KL"/>
</dbReference>
<dbReference type="InterPro" id="IPR002052">
    <property type="entry name" value="DNA_methylase_N6_adenine_CS"/>
</dbReference>
<dbReference type="InterPro" id="IPR000241">
    <property type="entry name" value="RlmKL-like_Mtase"/>
</dbReference>
<dbReference type="InterPro" id="IPR053943">
    <property type="entry name" value="RlmKL-like_Mtase_CS"/>
</dbReference>
<dbReference type="InterPro" id="IPR054170">
    <property type="entry name" value="RlmL_1st"/>
</dbReference>
<dbReference type="InterPro" id="IPR019614">
    <property type="entry name" value="SAM-dep_methyl-trfase"/>
</dbReference>
<dbReference type="InterPro" id="IPR029063">
    <property type="entry name" value="SAM-dependent_MTases_sf"/>
</dbReference>
<dbReference type="InterPro" id="IPR004114">
    <property type="entry name" value="THUMP_dom"/>
</dbReference>
<dbReference type="NCBIfam" id="NF008748">
    <property type="entry name" value="PRK11783.1"/>
    <property type="match status" value="1"/>
</dbReference>
<dbReference type="PANTHER" id="PTHR47313">
    <property type="entry name" value="RIBOSOMAL RNA LARGE SUBUNIT METHYLTRANSFERASE K/L"/>
    <property type="match status" value="1"/>
</dbReference>
<dbReference type="PANTHER" id="PTHR47313:SF1">
    <property type="entry name" value="RIBOSOMAL RNA LARGE SUBUNIT METHYLTRANSFERASE K_L"/>
    <property type="match status" value="1"/>
</dbReference>
<dbReference type="Pfam" id="PF10672">
    <property type="entry name" value="Methyltrans_SAM"/>
    <property type="match status" value="1"/>
</dbReference>
<dbReference type="Pfam" id="PF22020">
    <property type="entry name" value="RlmL_1st"/>
    <property type="match status" value="1"/>
</dbReference>
<dbReference type="Pfam" id="PF02926">
    <property type="entry name" value="THUMP"/>
    <property type="match status" value="1"/>
</dbReference>
<dbReference type="Pfam" id="PF01170">
    <property type="entry name" value="UPF0020"/>
    <property type="match status" value="1"/>
</dbReference>
<dbReference type="PIRSF" id="PIRSF037618">
    <property type="entry name" value="RNA_Mtase_bacteria_prd"/>
    <property type="match status" value="1"/>
</dbReference>
<dbReference type="SMART" id="SM00981">
    <property type="entry name" value="THUMP"/>
    <property type="match status" value="1"/>
</dbReference>
<dbReference type="SUPFAM" id="SSF53335">
    <property type="entry name" value="S-adenosyl-L-methionine-dependent methyltransferases"/>
    <property type="match status" value="2"/>
</dbReference>
<dbReference type="PROSITE" id="PS51165">
    <property type="entry name" value="THUMP"/>
    <property type="match status" value="1"/>
</dbReference>
<dbReference type="PROSITE" id="PS01261">
    <property type="entry name" value="UPF0020"/>
    <property type="match status" value="1"/>
</dbReference>
<comment type="function">
    <text evidence="1">Specifically methylates the guanine in position 2445 (m2G2445) and the guanine in position 2069 (m7G2069) of 23S rRNA.</text>
</comment>
<comment type="catalytic activity">
    <reaction evidence="1">
        <text>guanosine(2445) in 23S rRNA + S-adenosyl-L-methionine = N(2)-methylguanosine(2445) in 23S rRNA + S-adenosyl-L-homocysteine + H(+)</text>
        <dbReference type="Rhea" id="RHEA:42740"/>
        <dbReference type="Rhea" id="RHEA-COMP:10215"/>
        <dbReference type="Rhea" id="RHEA-COMP:10216"/>
        <dbReference type="ChEBI" id="CHEBI:15378"/>
        <dbReference type="ChEBI" id="CHEBI:57856"/>
        <dbReference type="ChEBI" id="CHEBI:59789"/>
        <dbReference type="ChEBI" id="CHEBI:74269"/>
        <dbReference type="ChEBI" id="CHEBI:74481"/>
        <dbReference type="EC" id="2.1.1.173"/>
    </reaction>
</comment>
<comment type="catalytic activity">
    <reaction evidence="1">
        <text>guanosine(2069) in 23S rRNA + S-adenosyl-L-methionine = N(2)-methylguanosine(2069) in 23S rRNA + S-adenosyl-L-homocysteine + H(+)</text>
        <dbReference type="Rhea" id="RHEA:43772"/>
        <dbReference type="Rhea" id="RHEA-COMP:10688"/>
        <dbReference type="Rhea" id="RHEA-COMP:10689"/>
        <dbReference type="ChEBI" id="CHEBI:15378"/>
        <dbReference type="ChEBI" id="CHEBI:57856"/>
        <dbReference type="ChEBI" id="CHEBI:59789"/>
        <dbReference type="ChEBI" id="CHEBI:74269"/>
        <dbReference type="ChEBI" id="CHEBI:74481"/>
        <dbReference type="EC" id="2.1.1.264"/>
    </reaction>
</comment>
<comment type="subcellular location">
    <subcellularLocation>
        <location evidence="1">Cytoplasm</location>
    </subcellularLocation>
</comment>
<comment type="similarity">
    <text evidence="1">Belongs to the methyltransferase superfamily. RlmKL family.</text>
</comment>
<reference key="1">
    <citation type="submission" date="2006-12" db="EMBL/GenBank/DDBJ databases">
        <title>Complete sequence of Shewanella sp. W3-18-1.</title>
        <authorList>
            <consortium name="US DOE Joint Genome Institute"/>
            <person name="Copeland A."/>
            <person name="Lucas S."/>
            <person name="Lapidus A."/>
            <person name="Barry K."/>
            <person name="Detter J.C."/>
            <person name="Glavina del Rio T."/>
            <person name="Hammon N."/>
            <person name="Israni S."/>
            <person name="Dalin E."/>
            <person name="Tice H."/>
            <person name="Pitluck S."/>
            <person name="Chain P."/>
            <person name="Malfatti S."/>
            <person name="Shin M."/>
            <person name="Vergez L."/>
            <person name="Schmutz J."/>
            <person name="Larimer F."/>
            <person name="Land M."/>
            <person name="Hauser L."/>
            <person name="Kyrpides N."/>
            <person name="Lykidis A."/>
            <person name="Tiedje J."/>
            <person name="Richardson P."/>
        </authorList>
    </citation>
    <scope>NUCLEOTIDE SEQUENCE [LARGE SCALE GENOMIC DNA]</scope>
    <source>
        <strain>W3-18-1</strain>
    </source>
</reference>
<keyword id="KW-0963">Cytoplasm</keyword>
<keyword id="KW-0489">Methyltransferase</keyword>
<keyword id="KW-0694">RNA-binding</keyword>
<keyword id="KW-0698">rRNA processing</keyword>
<keyword id="KW-0949">S-adenosyl-L-methionine</keyword>
<keyword id="KW-0808">Transferase</keyword>
<proteinExistence type="inferred from homology"/>
<feature type="chain" id="PRO_0000366834" description="Ribosomal RNA large subunit methyltransferase K/L">
    <location>
        <begin position="1"/>
        <end position="709"/>
    </location>
</feature>
<feature type="domain" description="THUMP" evidence="1">
    <location>
        <begin position="43"/>
        <end position="154"/>
    </location>
</feature>
<accession>A1RKM2</accession>
<sequence>MLNFFAAAPKGFEYSLAQELTEFGATEIKESVAGVYFTAPLTLAYRITLWTRLASRIVLVIYKGSCESAEQLYNAAYCIDWPAHFSNRNTFSIDFHGTGGFINNTQFGALKIKDAIVDRFRDDGDERPNVSRTDADFKVDAHFRNGVITIAMNFSGPSLHQRGYRSTTGEAPLKENLAANMLVRSGWQAAPTTLLDPFCGSGTVLIEAALMAADIAPGLQRNRFGFEHWRRHDKAVWQDIVAEAKARASLGVKRCEIKFYGSDIDSRLVALAKRNAENAGVLELIEFKVANALNIEPPAAEGYLITNPPYGERLGNVSELLQLYYQLGDKFKKEFGGWKVAMLCSDIELISSLKLKADKQMKMFNGALECAFNLYTLHANSTRRDTPVLPEGVDIADIAPAFANRIKKNAKQLEKWAQKEGIDSYRIYDADIPEYNVAVDKYLDYVIVQEYMAPATIPEAVTKRRLSDVLLALPAAIGINPNKIIMKTRERQKGTSQYQKLDERKLELITTEYGAKFKLNLTGYLDTGLFLDHRLTRRLVGQKAKGRRVLNLFSYTGSASVHAALGGAKSVTTVDMSNTYIAWAKDNFALNGLQGKQYEFVQADCLQWIRDCNEQFDLIFIDPPTFSNSKRMEDSFDVQRDHVNLLSALVKLLSPTGELVFSNNKRKFKMDIETLTKMNITVKNIDDITLPMDYKRNPHIHNTWLITHA</sequence>